<protein>
    <recommendedName>
        <fullName>Alcohol dehydrogenase</fullName>
        <ecNumber>1.1.1.1</ecNumber>
    </recommendedName>
</protein>
<sequence length="256" mass="27761">MSFTLTNKNVIFVAGLGGIGLDTSKELLKRDLKNLVILDRIENPAAIAELKAINPKVTVTFYPYDVTVPIAETTKLLKTIFAQLKTVDVLINGAGILDDHQIERTIAVNYTGLVNTTTAILDFWDKRKGGPGGIICNIGSVTGFNAIYQVPVYSGTKAAVVNFTSSLAKLAPITGVTAYTVNPGITRTTLVHKFNSWLDVEPQVAEKLLAHPTQPSLACAENFVKAIELNQNGAIWKLDLGTLEAIQWTKHWDSGI</sequence>
<evidence type="ECO:0000255" key="1">
    <source>
        <dbReference type="PROSITE-ProRule" id="PRU10001"/>
    </source>
</evidence>
<evidence type="ECO:0000269" key="2">
    <source>
    </source>
</evidence>
<evidence type="ECO:0000269" key="3">
    <source>
    </source>
</evidence>
<evidence type="ECO:0000269" key="4">
    <source>
    </source>
</evidence>
<evidence type="ECO:0000269" key="5">
    <source>
    </source>
</evidence>
<evidence type="ECO:0000269" key="6">
    <source>
    </source>
</evidence>
<evidence type="ECO:0000269" key="7">
    <source>
    </source>
</evidence>
<evidence type="ECO:0000269" key="8">
    <source>
    </source>
</evidence>
<evidence type="ECO:0000269" key="9">
    <source>
    </source>
</evidence>
<evidence type="ECO:0000269" key="10">
    <source>
    </source>
</evidence>
<evidence type="ECO:0000269" key="11">
    <source>
    </source>
</evidence>
<evidence type="ECO:0000269" key="12">
    <source>
    </source>
</evidence>
<evidence type="ECO:0000269" key="13">
    <source>
    </source>
</evidence>
<evidence type="ECO:0000269" key="14">
    <source>
    </source>
</evidence>
<evidence type="ECO:0000269" key="15">
    <source>
    </source>
</evidence>
<evidence type="ECO:0000269" key="16">
    <source>
    </source>
</evidence>
<evidence type="ECO:0000269" key="17">
    <source>
    </source>
</evidence>
<evidence type="ECO:0000269" key="18">
    <source>
    </source>
</evidence>
<evidence type="ECO:0000269" key="19">
    <source>
    </source>
</evidence>
<evidence type="ECO:0000269" key="20">
    <source>
    </source>
</evidence>
<evidence type="ECO:0000269" key="21">
    <source>
    </source>
</evidence>
<evidence type="ECO:0000269" key="22">
    <source>
    </source>
</evidence>
<evidence type="ECO:0000269" key="23">
    <source ref="12"/>
</evidence>
<evidence type="ECO:0000269" key="24">
    <source ref="18"/>
</evidence>
<evidence type="ECO:0000305" key="25"/>
<evidence type="ECO:0007829" key="26">
    <source>
        <dbReference type="PDB" id="1MG5"/>
    </source>
</evidence>
<accession>P00334</accession>
<accession>A4V0Q1</accession>
<accession>Q27332</accession>
<accession>Q27579</accession>
<accession>Q27596</accession>
<accession>Q2MGK2</accession>
<accession>Q53XD5</accession>
<accession>Q95TC8</accession>
<accession>Q9NKC0</accession>
<accession>Q9VJS3</accession>
<gene>
    <name type="primary">Adh</name>
    <name type="ORF">CG3481</name>
</gene>
<name>ADH_DROME</name>
<reference key="1">
    <citation type="journal article" date="1981" name="Proc. Natl. Acad. Sci. U.S.A.">
        <title>Alcohol dehydrogenase gene of Drosophila melanogaster: relationship of intervening sequences to functional domains in the protein.</title>
        <authorList>
            <person name="Benyajati C."/>
            <person name="Place A.R."/>
            <person name="Powers D.A."/>
            <person name="Sofer W."/>
        </authorList>
    </citation>
    <scope>NUCLEOTIDE SEQUENCE [GENOMIC DNA] (ALLELE ADH-S)</scope>
</reference>
<reference key="2">
    <citation type="journal article" date="1982" name="Nucleic Acids Res.">
        <title>In vitro suppression of a nonsense mutant of Drosophila melanogaster.</title>
        <authorList>
            <person name="Kubli E."/>
            <person name="Schmidt T."/>
            <person name="Martin P.F."/>
            <person name="Sofer W."/>
        </authorList>
    </citation>
    <scope>NUCLEOTIDE SEQUENCE [GENOMIC DNA] (ALLELE ADH-NB)</scope>
</reference>
<reference key="3">
    <citation type="journal article" date="1983" name="Nature">
        <title>Nucleotide polymorphism at the alcohol dehydrogenase locus of Drosophila melanogaster.</title>
        <authorList>
            <person name="Kreitman M."/>
        </authorList>
    </citation>
    <scope>NUCLEOTIDE SEQUENCE [GENOMIC DNA] (ALLELES ADH-S AND ADH-F)</scope>
</reference>
<reference key="4">
    <citation type="journal article" date="1985" name="J. Mol. Biol.">
        <title>UGA nonsense mutation in the alcohol dehydrogenase gene of Drosophila melanogaster.</title>
        <authorList>
            <person name="Martin P.F."/>
            <person name="Place A.R."/>
            <person name="Pentz E."/>
            <person name="Sofer W."/>
        </authorList>
    </citation>
    <scope>NUCLEOTIDE SEQUENCE [GENOMIC DNA] (ALLELE ADH-NB)</scope>
</reference>
<reference key="5">
    <citation type="journal article" date="1986" name="Genetics">
        <title>Excess polymorphism at the Adh locus in Drosophila melanogaster.</title>
        <authorList>
            <person name="Kreitman M.E."/>
            <person name="Aguade M."/>
        </authorList>
    </citation>
    <scope>NUCLEOTIDE SEQUENCE [GENOMIC DNA] (ALLELES ADH-JA-F AND ADH-AF-S)</scope>
</reference>
<reference key="6">
    <citation type="journal article" date="1987" name="Nucleic Acids Res.">
        <title>Adhn4 of Drosophila melanogaster is a nonsense mutation.</title>
        <authorList>
            <person name="Chia W."/>
            <person name="Savakis C."/>
            <person name="Karp R."/>
            <person name="Ashburner M."/>
        </authorList>
    </citation>
    <scope>NUCLEOTIDE SEQUENCE [GENOMIC DNA] (ALLELE ADH-N4)</scope>
</reference>
<reference key="7">
    <citation type="journal article" date="1988" name="J. Mol. Evol.">
        <title>Recent origin for a thermostable alcohol dehydrogenase allele of Drosophila melanogaster.</title>
        <authorList>
            <person name="Collet C."/>
        </authorList>
    </citation>
    <scope>NUCLEOTIDE SEQUENCE [GENOMIC DNA] (ALLELE ADH-F-CHD)</scope>
    <source>
        <tissue>Embryo</tissue>
    </source>
</reference>
<reference key="8">
    <citation type="journal article" date="1990" name="Mol. Biol. Evol.">
        <title>Analysis of the gene encoding the multifunctional alcohol dehydrogenase allozyme ADH-71k of Drosophila melanogaster.</title>
        <authorList>
            <person name="Eisses K.T."/>
            <person name="Andriesse A.J."/>
            <person name="de Boer A.D."/>
            <person name="Thorig G.E.W."/>
            <person name="Weisbeek P.J."/>
        </authorList>
    </citation>
    <scope>NUCLEOTIDE SEQUENCE [GENOMIC DNA] (ALLELE ADH-71K)</scope>
</reference>
<reference key="9">
    <citation type="journal article" date="1991" name="Genetics">
        <title>Inferring the evolutionary histories of the Adh and Adh-dup loci in Drosophila melanogaster from patterns of polymorphism and divergence.</title>
        <authorList>
            <person name="Kreitman M."/>
            <person name="Hudson R.R."/>
        </authorList>
    </citation>
    <scope>NUCLEOTIDE SEQUENCE [GENOMIC DNA] (ALLELE ADH-S)</scope>
</reference>
<reference key="10">
    <citation type="journal article" date="1991" name="Genetics">
        <title>Associations between DNA sequence variation and variation in expression of the Adh gene in natural populations of Drosophila melanogaster.</title>
        <authorList>
            <person name="Laurie C.C."/>
            <person name="Bridgham J.T."/>
            <person name="Choudhary M."/>
        </authorList>
    </citation>
    <scope>NUCLEOTIDE SEQUENCE [GENOMIC DNA] (ALLELE ADH-F)</scope>
    <source>
        <strain>KA12</strain>
        <strain>NC-016</strain>
        <strain>RI32</strain>
    </source>
</reference>
<reference key="11">
    <citation type="journal article" date="1995" name="Genetics">
        <title>Effects of a transposable element insertion on alcohol dehydrogenase expression in Drosophila melanogaster.</title>
        <authorList>
            <person name="Dunn R.C."/>
            <person name="Laurie C.C."/>
        </authorList>
    </citation>
    <scope>NUCLEOTIDE SEQUENCE [GENOMIC DNA]</scope>
</reference>
<reference key="12">
    <citation type="submission" date="1996-12" db="EMBL/GenBank/DDBJ databases">
        <authorList>
            <person name="Brogna S."/>
            <person name="Ashburner M."/>
        </authorList>
    </citation>
    <scope>NUCLEOTIDE SEQUENCE [MRNA] (ALLELE ADH-S)</scope>
    <source>
        <strain>Canton-S</strain>
    </source>
</reference>
<reference key="13">
    <citation type="journal article" date="1999" name="Mol. Biol. Evol.">
        <title>Is the fast/slow allozyme variation at the Adh locus of Drosophila melanogaster an ancient balanced polymorphism?</title>
        <authorList>
            <person name="Begun D."/>
            <person name="Betancourt A."/>
            <person name="Langley C."/>
            <person name="Stephan W."/>
        </authorList>
    </citation>
    <scope>NUCLEOTIDE SEQUENCE [GENOMIC DNA] (ALLELES ADH-H3; ADH-H12; ADH-H13; ADH-H18; ADH-H21; ADH-K15; ADH-K30; ADH-K35; ADH-K37 AND ADH-K82)</scope>
    <source>
        <strain>Zimbabwe</strain>
    </source>
</reference>
<reference key="14">
    <citation type="journal article" date="1999" name="Genetics">
        <title>An exploration of the sequence of a 2.9-Mb region of the genome of Drosophila melanogaster: the Adh region.</title>
        <authorList>
            <person name="Ashburner M."/>
            <person name="Misra S."/>
            <person name="Roote J."/>
            <person name="Lewis S.E."/>
            <person name="Blazej R.G."/>
            <person name="Davis T."/>
            <person name="Doyle C."/>
            <person name="Galle R.F."/>
            <person name="George R.A."/>
            <person name="Harris N.L."/>
            <person name="Hartzell G."/>
            <person name="Harvey D.A."/>
            <person name="Hong L."/>
            <person name="Houston K.A."/>
            <person name="Hoskins R.A."/>
            <person name="Johnson G."/>
            <person name="Martin C."/>
            <person name="Moshrefi A.R."/>
            <person name="Palazzolo M."/>
            <person name="Reese M.G."/>
            <person name="Spradling A.C."/>
            <person name="Tsang G."/>
            <person name="Wan K.H."/>
            <person name="Whitelaw K."/>
            <person name="Celniker S.E."/>
            <person name="Rubin G.M."/>
        </authorList>
    </citation>
    <scope>NUCLEOTIDE SEQUENCE [LARGE SCALE GENOMIC DNA]</scope>
    <source>
        <strain>Berkeley</strain>
    </source>
</reference>
<reference key="15">
    <citation type="journal article" date="2000" name="Science">
        <title>The genome sequence of Drosophila melanogaster.</title>
        <authorList>
            <person name="Adams M.D."/>
            <person name="Celniker S.E."/>
            <person name="Holt R.A."/>
            <person name="Evans C.A."/>
            <person name="Gocayne J.D."/>
            <person name="Amanatides P.G."/>
            <person name="Scherer S.E."/>
            <person name="Li P.W."/>
            <person name="Hoskins R.A."/>
            <person name="Galle R.F."/>
            <person name="George R.A."/>
            <person name="Lewis S.E."/>
            <person name="Richards S."/>
            <person name="Ashburner M."/>
            <person name="Henderson S.N."/>
            <person name="Sutton G.G."/>
            <person name="Wortman J.R."/>
            <person name="Yandell M.D."/>
            <person name="Zhang Q."/>
            <person name="Chen L.X."/>
            <person name="Brandon R.C."/>
            <person name="Rogers Y.-H.C."/>
            <person name="Blazej R.G."/>
            <person name="Champe M."/>
            <person name="Pfeiffer B.D."/>
            <person name="Wan K.H."/>
            <person name="Doyle C."/>
            <person name="Baxter E.G."/>
            <person name="Helt G."/>
            <person name="Nelson C.R."/>
            <person name="Miklos G.L.G."/>
            <person name="Abril J.F."/>
            <person name="Agbayani A."/>
            <person name="An H.-J."/>
            <person name="Andrews-Pfannkoch C."/>
            <person name="Baldwin D."/>
            <person name="Ballew R.M."/>
            <person name="Basu A."/>
            <person name="Baxendale J."/>
            <person name="Bayraktaroglu L."/>
            <person name="Beasley E.M."/>
            <person name="Beeson K.Y."/>
            <person name="Benos P.V."/>
            <person name="Berman B.P."/>
            <person name="Bhandari D."/>
            <person name="Bolshakov S."/>
            <person name="Borkova D."/>
            <person name="Botchan M.R."/>
            <person name="Bouck J."/>
            <person name="Brokstein P."/>
            <person name="Brottier P."/>
            <person name="Burtis K.C."/>
            <person name="Busam D.A."/>
            <person name="Butler H."/>
            <person name="Cadieu E."/>
            <person name="Center A."/>
            <person name="Chandra I."/>
            <person name="Cherry J.M."/>
            <person name="Cawley S."/>
            <person name="Dahlke C."/>
            <person name="Davenport L.B."/>
            <person name="Davies P."/>
            <person name="de Pablos B."/>
            <person name="Delcher A."/>
            <person name="Deng Z."/>
            <person name="Mays A.D."/>
            <person name="Dew I."/>
            <person name="Dietz S.M."/>
            <person name="Dodson K."/>
            <person name="Doup L.E."/>
            <person name="Downes M."/>
            <person name="Dugan-Rocha S."/>
            <person name="Dunkov B.C."/>
            <person name="Dunn P."/>
            <person name="Durbin K.J."/>
            <person name="Evangelista C.C."/>
            <person name="Ferraz C."/>
            <person name="Ferriera S."/>
            <person name="Fleischmann W."/>
            <person name="Fosler C."/>
            <person name="Gabrielian A.E."/>
            <person name="Garg N.S."/>
            <person name="Gelbart W.M."/>
            <person name="Glasser K."/>
            <person name="Glodek A."/>
            <person name="Gong F."/>
            <person name="Gorrell J.H."/>
            <person name="Gu Z."/>
            <person name="Guan P."/>
            <person name="Harris M."/>
            <person name="Harris N.L."/>
            <person name="Harvey D.A."/>
            <person name="Heiman T.J."/>
            <person name="Hernandez J.R."/>
            <person name="Houck J."/>
            <person name="Hostin D."/>
            <person name="Houston K.A."/>
            <person name="Howland T.J."/>
            <person name="Wei M.-H."/>
            <person name="Ibegwam C."/>
            <person name="Jalali M."/>
            <person name="Kalush F."/>
            <person name="Karpen G.H."/>
            <person name="Ke Z."/>
            <person name="Kennison J.A."/>
            <person name="Ketchum K.A."/>
            <person name="Kimmel B.E."/>
            <person name="Kodira C.D."/>
            <person name="Kraft C.L."/>
            <person name="Kravitz S."/>
            <person name="Kulp D."/>
            <person name="Lai Z."/>
            <person name="Lasko P."/>
            <person name="Lei Y."/>
            <person name="Levitsky A.A."/>
            <person name="Li J.H."/>
            <person name="Li Z."/>
            <person name="Liang Y."/>
            <person name="Lin X."/>
            <person name="Liu X."/>
            <person name="Mattei B."/>
            <person name="McIntosh T.C."/>
            <person name="McLeod M.P."/>
            <person name="McPherson D."/>
            <person name="Merkulov G."/>
            <person name="Milshina N.V."/>
            <person name="Mobarry C."/>
            <person name="Morris J."/>
            <person name="Moshrefi A."/>
            <person name="Mount S.M."/>
            <person name="Moy M."/>
            <person name="Murphy B."/>
            <person name="Murphy L."/>
            <person name="Muzny D.M."/>
            <person name="Nelson D.L."/>
            <person name="Nelson D.R."/>
            <person name="Nelson K.A."/>
            <person name="Nixon K."/>
            <person name="Nusskern D.R."/>
            <person name="Pacleb J.M."/>
            <person name="Palazzolo M."/>
            <person name="Pittman G.S."/>
            <person name="Pan S."/>
            <person name="Pollard J."/>
            <person name="Puri V."/>
            <person name="Reese M.G."/>
            <person name="Reinert K."/>
            <person name="Remington K."/>
            <person name="Saunders R.D.C."/>
            <person name="Scheeler F."/>
            <person name="Shen H."/>
            <person name="Shue B.C."/>
            <person name="Siden-Kiamos I."/>
            <person name="Simpson M."/>
            <person name="Skupski M.P."/>
            <person name="Smith T.J."/>
            <person name="Spier E."/>
            <person name="Spradling A.C."/>
            <person name="Stapleton M."/>
            <person name="Strong R."/>
            <person name="Sun E."/>
            <person name="Svirskas R."/>
            <person name="Tector C."/>
            <person name="Turner R."/>
            <person name="Venter E."/>
            <person name="Wang A.H."/>
            <person name="Wang X."/>
            <person name="Wang Z.-Y."/>
            <person name="Wassarman D.A."/>
            <person name="Weinstock G.M."/>
            <person name="Weissenbach J."/>
            <person name="Williams S.M."/>
            <person name="Woodage T."/>
            <person name="Worley K.C."/>
            <person name="Wu D."/>
            <person name="Yang S."/>
            <person name="Yao Q.A."/>
            <person name="Ye J."/>
            <person name="Yeh R.-F."/>
            <person name="Zaveri J.S."/>
            <person name="Zhan M."/>
            <person name="Zhang G."/>
            <person name="Zhao Q."/>
            <person name="Zheng L."/>
            <person name="Zheng X.H."/>
            <person name="Zhong F.N."/>
            <person name="Zhong W."/>
            <person name="Zhou X."/>
            <person name="Zhu S.C."/>
            <person name="Zhu X."/>
            <person name="Smith H.O."/>
            <person name="Gibbs R.A."/>
            <person name="Myers E.W."/>
            <person name="Rubin G.M."/>
            <person name="Venter J.C."/>
        </authorList>
    </citation>
    <scope>NUCLEOTIDE SEQUENCE [LARGE SCALE GENOMIC DNA]</scope>
    <source>
        <strain>Berkeley</strain>
    </source>
</reference>
<reference key="16">
    <citation type="journal article" date="2002" name="Genome Biol.">
        <title>Annotation of the Drosophila melanogaster euchromatic genome: a systematic review.</title>
        <authorList>
            <person name="Misra S."/>
            <person name="Crosby M.A."/>
            <person name="Mungall C.J."/>
            <person name="Matthews B.B."/>
            <person name="Campbell K.S."/>
            <person name="Hradecky P."/>
            <person name="Huang Y."/>
            <person name="Kaminker J.S."/>
            <person name="Millburn G.H."/>
            <person name="Prochnik S.E."/>
            <person name="Smith C.D."/>
            <person name="Tupy J.L."/>
            <person name="Whitfield E.J."/>
            <person name="Bayraktaroglu L."/>
            <person name="Berman B.P."/>
            <person name="Bettencourt B.R."/>
            <person name="Celniker S.E."/>
            <person name="de Grey A.D.N.J."/>
            <person name="Drysdale R.A."/>
            <person name="Harris N.L."/>
            <person name="Richter J."/>
            <person name="Russo S."/>
            <person name="Schroeder A.J."/>
            <person name="Shu S.Q."/>
            <person name="Stapleton M."/>
            <person name="Yamada C."/>
            <person name="Ashburner M."/>
            <person name="Gelbart W.M."/>
            <person name="Rubin G.M."/>
            <person name="Lewis S.E."/>
        </authorList>
    </citation>
    <scope>GENOME REANNOTATION</scope>
    <source>
        <strain>Berkeley</strain>
    </source>
</reference>
<reference key="17">
    <citation type="journal article" date="2002" name="Genome Biol.">
        <title>A Drosophila full-length cDNA resource.</title>
        <authorList>
            <person name="Stapleton M."/>
            <person name="Carlson J.W."/>
            <person name="Brokstein P."/>
            <person name="Yu C."/>
            <person name="Champe M."/>
            <person name="George R.A."/>
            <person name="Guarin H."/>
            <person name="Kronmiller B."/>
            <person name="Pacleb J.M."/>
            <person name="Park S."/>
            <person name="Wan K.H."/>
            <person name="Rubin G.M."/>
            <person name="Celniker S.E."/>
        </authorList>
    </citation>
    <scope>NUCLEOTIDE SEQUENCE [LARGE SCALE MRNA] (ALLELE ADH-S)</scope>
    <source>
        <strain>Berkeley</strain>
        <tissue>Head</tissue>
    </source>
</reference>
<reference key="18">
    <citation type="submission" date="2004-04" db="EMBL/GenBank/DDBJ databases">
        <authorList>
            <person name="Stapleton M."/>
            <person name="Carlson J.W."/>
            <person name="Chavez C."/>
            <person name="Frise E."/>
            <person name="George R.A."/>
            <person name="Pacleb J.M."/>
            <person name="Park S."/>
            <person name="Wan K.H."/>
            <person name="Yu C."/>
            <person name="Rubin G.M."/>
            <person name="Celniker S.E."/>
        </authorList>
    </citation>
    <scope>NUCLEOTIDE SEQUENCE [LARGE SCALE MRNA] (ALLELE ADH-S)</scope>
    <source>
        <strain>Berkeley</strain>
        <tissue>Head</tissue>
    </source>
</reference>
<reference key="19">
    <citation type="journal article" date="1979" name="Biochimie">
        <title>Chemical basis of the electrophoretic variation observed at the alcohol dehydrogenase locus of Drosophila melanogaster.</title>
        <authorList>
            <person name="Retzios A.D."/>
            <person name="Thatcher D.R."/>
        </authorList>
    </citation>
    <scope>PROTEIN SEQUENCE OF 2-256 (ALLELE ADH-F')</scope>
</reference>
<reference key="20">
    <citation type="journal article" date="1980" name="Biochem. J.">
        <title>The complete amino acid sequence of three alcohol dehydrogenase alleloenzymes (AdhN-11, AdhS and AdhUF) from the fruitfly Drosophila melanogaster.</title>
        <authorList>
            <person name="Thatcher D.R."/>
        </authorList>
    </citation>
    <scope>PROTEIN SEQUENCE OF 2-256 (ALLELES ADH-F; ADH-S; ADH-UF AND ADH-N11)</scope>
    <scope>ACETYLATION AT SER-2</scope>
</reference>
<reference key="21">
    <citation type="journal article" date="1980" name="Biochem. J.">
        <authorList>
            <person name="Thatcher D.R."/>
        </authorList>
    </citation>
    <scope>ERRATUM OF PUBMED:6821373</scope>
</reference>
<reference key="22">
    <citation type="journal article" date="1985" name="J. Mol. Biol.">
        <title>Mutation of the Adh gene of Drosophila melanogaster containing an internal tandem duplication.</title>
        <authorList>
            <person name="Chia W."/>
            <person name="Savakis C."/>
            <person name="Karp R."/>
            <person name="Pelham H."/>
            <person name="Ashburner M."/>
        </authorList>
    </citation>
    <scope>NUCLEOTIDE SEQUENCE [GENOMIC DNA] OF 52-256 (ALLELE ADH-NLA248)</scope>
</reference>
<reference key="23">
    <citation type="journal article" date="1980" name="Nucleic Acids Res.">
        <title>Alcohol dehydrogenase in Drosophila: isolation and characterization of messenger RNA and cDNA clone.</title>
        <authorList>
            <person name="Benyajati C."/>
            <person name="Wang N."/>
            <person name="Reddy A."/>
            <person name="Weinberg E."/>
            <person name="Sofer W."/>
        </authorList>
    </citation>
    <scope>NUCLEOTIDE SEQUENCE [GENOMIC DNA] OF 141-256 (ALLELE ADH-F)</scope>
</reference>
<reference key="24">
    <citation type="journal article" date="1981" name="Proc. Natl. Acad. Sci. U.S.A.">
        <title>Structural analysis of an electrophoretically cryptic alcohol dehydrogenase variant from an Australian population of Drosophila melanogaster.</title>
        <authorList>
            <person name="Chambers G.K."/>
            <person name="Laver W.G."/>
            <person name="Campbell S."/>
            <person name="Gibson J.B."/>
        </authorList>
    </citation>
    <scope>PROTEIN SEQUENCE OF 208-225 (ALLELE ADH-F-CHD)</scope>
</reference>
<reference key="25">
    <citation type="journal article" date="1990" name="Biochemistry">
        <title>Site-directed mutagenesis of glycine-14 and two 'critical' cysteinyl residues in Drosophila alcohol dehydrogenase.</title>
        <authorList>
            <person name="Chen Z."/>
            <person name="Lu L."/>
            <person name="Shirley M."/>
            <person name="Lee W.R."/>
            <person name="Chang S.H."/>
        </authorList>
    </citation>
    <scope>MUTAGENESIS</scope>
</reference>
<reference key="26">
    <citation type="journal article" date="1992" name="FEBS Lett.">
        <title>Protein engineering of Drosophila alcohol dehydrogenase. The hydroxyl group of Tyr152 is involved in the active site of the enzyme.</title>
        <authorList>
            <person name="Albalat R."/>
            <person name="Gonzalez-Duarte R."/>
            <person name="Atrian S."/>
        </authorList>
    </citation>
    <scope>MUTAGENESIS OF TYR-153</scope>
</reference>
<reference key="27">
    <citation type="journal article" date="1993" name="Biochemistry">
        <title>Site-specific mutagenesis of Drosophila alcohol dehydrogenase: evidence for involvement of tyrosine-152 and lysine-156 in catalysis.</title>
        <authorList>
            <person name="Chen Z."/>
            <person name="Jiang J.C."/>
            <person name="Lin Z.-G."/>
            <person name="Lee W.R."/>
            <person name="Baker M.E."/>
            <person name="Chang S.H."/>
        </authorList>
    </citation>
    <scope>MUTAGENESIS OF TYR-153 AND LYS-157</scope>
</reference>
<reference key="28">
    <citation type="journal article" date="1993" name="FEBS Lett.">
        <title>Effect of site-directed mutagenesis on conserved positions of Drosophila alcohol dehydrogenase.</title>
        <authorList>
            <person name="Cols N."/>
            <person name="Marfany G."/>
            <person name="Atrian S."/>
            <person name="Gonzalez-Duarte R."/>
        </authorList>
    </citation>
    <scope>MUTAGENESIS OF GLY-130; GLY-133; TYR-153; LYS-157 AND GLY-184</scope>
</reference>
<reference key="29">
    <citation type="journal article" date="2005" name="J. Mol. Biol.">
        <title>Drosophila alcohol dehydrogenase: acetate-enzyme interactions and novel insights into the effects of electrostatics on catalysis.</title>
        <authorList>
            <person name="Benach J."/>
            <person name="Winberg J.-O."/>
            <person name="Svendsen J.-S."/>
            <person name="Atrian S."/>
            <person name="Gonzalez-Duarte R."/>
            <person name="Ladenstein R."/>
        </authorList>
    </citation>
    <scope>X-RAY CRYSTALLOGRAPHY (1.6 ANGSTROMS) IN COMPLEX WITH NAD AND SUBSTRATE</scope>
</reference>
<proteinExistence type="evidence at protein level"/>
<comment type="catalytic activity">
    <reaction evidence="1">
        <text>a primary alcohol + NAD(+) = an aldehyde + NADH + H(+)</text>
        <dbReference type="Rhea" id="RHEA:10736"/>
        <dbReference type="ChEBI" id="CHEBI:15378"/>
        <dbReference type="ChEBI" id="CHEBI:15734"/>
        <dbReference type="ChEBI" id="CHEBI:17478"/>
        <dbReference type="ChEBI" id="CHEBI:57540"/>
        <dbReference type="ChEBI" id="CHEBI:57945"/>
        <dbReference type="EC" id="1.1.1.1"/>
    </reaction>
</comment>
<comment type="catalytic activity">
    <reaction evidence="1">
        <text>a secondary alcohol + NAD(+) = a ketone + NADH + H(+)</text>
        <dbReference type="Rhea" id="RHEA:10740"/>
        <dbReference type="ChEBI" id="CHEBI:15378"/>
        <dbReference type="ChEBI" id="CHEBI:17087"/>
        <dbReference type="ChEBI" id="CHEBI:35681"/>
        <dbReference type="ChEBI" id="CHEBI:57540"/>
        <dbReference type="ChEBI" id="CHEBI:57945"/>
        <dbReference type="EC" id="1.1.1.1"/>
    </reaction>
</comment>
<comment type="activity regulation">
    <text>Inhibited by 2,2,2-trifluoroethanol and pyrazole.</text>
</comment>
<comment type="subunit">
    <text evidence="5">Homodimer.</text>
</comment>
<comment type="polymorphism">
    <text evidence="2 3 6 7 9 10 11 12 13 14 15 16 17 18 19 20 23 24">Virtually all natural populations of this species are polymorphic for 2 electrophoretically distinguishable alleles, Adh-S and Adh-F (PubMed:12537569, PubMed:1673107, PubMed:1683848, PubMed:6410283, PubMed:6780981, PubMed:6789320, PubMed:6821373, Ref.12, Ref.18). The sequence of the Adh-S allele is shown (PubMed:12537569, PubMed:1673107, PubMed:6410283, PubMed:6789320, PubMed:6821373, Ref.12, Ref.18). Other naturally occurring alleles include Adh-JA-F, Adh-AF-S, Adh-F-CHD, Adh-71K, Adh-UF and Adh-F' (PubMed:115502, PubMed:2124644, PubMed:3021568, PubMed:3137352, PubMed:6789328, PubMed:6821373). Artificially induced mutations include Adh-NB, Adh-NLA248, Adh-N4 and Adh-N11 (PubMed:2419573, PubMed:3108863, PubMed:3928896, PubMed:6818527, PubMed:6821373).</text>
</comment>
<comment type="similarity">
    <text evidence="25">Belongs to the short-chain dehydrogenases/reductases (SDR) family.</text>
</comment>
<organism>
    <name type="scientific">Drosophila melanogaster</name>
    <name type="common">Fruit fly</name>
    <dbReference type="NCBI Taxonomy" id="7227"/>
    <lineage>
        <taxon>Eukaryota</taxon>
        <taxon>Metazoa</taxon>
        <taxon>Ecdysozoa</taxon>
        <taxon>Arthropoda</taxon>
        <taxon>Hexapoda</taxon>
        <taxon>Insecta</taxon>
        <taxon>Pterygota</taxon>
        <taxon>Neoptera</taxon>
        <taxon>Endopterygota</taxon>
        <taxon>Diptera</taxon>
        <taxon>Brachycera</taxon>
        <taxon>Muscomorpha</taxon>
        <taxon>Ephydroidea</taxon>
        <taxon>Drosophilidae</taxon>
        <taxon>Drosophila</taxon>
        <taxon>Sophophora</taxon>
    </lineage>
</organism>
<dbReference type="EC" id="1.1.1.1"/>
<dbReference type="EMBL" id="M17827">
    <property type="protein sequence ID" value="AAA28341.1"/>
    <property type="molecule type" value="Genomic_DNA"/>
</dbReference>
<dbReference type="EMBL" id="M17828">
    <property type="protein sequence ID" value="AAA28342.1"/>
    <property type="molecule type" value="Genomic_DNA"/>
</dbReference>
<dbReference type="EMBL" id="M19547">
    <property type="protein sequence ID" value="AAA70210.1"/>
    <property type="molecule type" value="Genomic_DNA"/>
</dbReference>
<dbReference type="EMBL" id="M17830">
    <property type="protein sequence ID" value="AAA28343.1"/>
    <property type="molecule type" value="Genomic_DNA"/>
</dbReference>
<dbReference type="EMBL" id="M17831">
    <property type="protein sequence ID" value="AAA28344.1"/>
    <property type="molecule type" value="Genomic_DNA"/>
</dbReference>
<dbReference type="EMBL" id="M17832">
    <property type="protein sequence ID" value="AAA28345.1"/>
    <property type="molecule type" value="Genomic_DNA"/>
</dbReference>
<dbReference type="EMBL" id="M17833">
    <property type="protein sequence ID" value="AAA28346.1"/>
    <property type="molecule type" value="Genomic_DNA"/>
</dbReference>
<dbReference type="EMBL" id="M17834">
    <property type="protein sequence ID" value="AAA28347.1"/>
    <property type="molecule type" value="Genomic_DNA"/>
</dbReference>
<dbReference type="EMBL" id="M17835">
    <property type="protein sequence ID" value="AAA28348.1"/>
    <property type="molecule type" value="Genomic_DNA"/>
</dbReference>
<dbReference type="EMBL" id="M17836">
    <property type="protein sequence ID" value="AAA28349.1"/>
    <property type="molecule type" value="Genomic_DNA"/>
</dbReference>
<dbReference type="EMBL" id="M17837">
    <property type="protein sequence ID" value="AAA70212.1"/>
    <property type="molecule type" value="Genomic_DNA"/>
</dbReference>
<dbReference type="EMBL" id="Z00030">
    <property type="protein sequence ID" value="CAA77330.1"/>
    <property type="molecule type" value="Genomic_DNA"/>
</dbReference>
<dbReference type="EMBL" id="M22210">
    <property type="protein sequence ID" value="AAA28338.1"/>
    <property type="molecule type" value="Genomic_DNA"/>
</dbReference>
<dbReference type="EMBL" id="M57239">
    <property type="protein sequence ID" value="AAA28330.1"/>
    <property type="molecule type" value="Genomic_DNA"/>
</dbReference>
<dbReference type="EMBL" id="X78384">
    <property type="protein sequence ID" value="CAA55151.1"/>
    <property type="molecule type" value="Genomic_DNA"/>
</dbReference>
<dbReference type="EMBL" id="M36580">
    <property type="protein sequence ID" value="AAA28331.1"/>
    <property type="molecule type" value="Genomic_DNA"/>
</dbReference>
<dbReference type="EMBL" id="X60791">
    <property type="protein sequence ID" value="CAA43204.1"/>
    <property type="molecule type" value="Genomic_DNA"/>
</dbReference>
<dbReference type="EMBL" id="X60792">
    <property type="protein sequence ID" value="CAA43205.1"/>
    <property type="molecule type" value="Genomic_DNA"/>
</dbReference>
<dbReference type="EMBL" id="X60793">
    <property type="protein sequence ID" value="CAA43206.1"/>
    <property type="molecule type" value="Genomic_DNA"/>
</dbReference>
<dbReference type="EMBL" id="U20765">
    <property type="protein sequence ID" value="AAA88817.1"/>
    <property type="molecule type" value="Genomic_DNA"/>
</dbReference>
<dbReference type="EMBL" id="X98338">
    <property type="protein sequence ID" value="CAA66981.1"/>
    <property type="molecule type" value="mRNA"/>
</dbReference>
<dbReference type="EMBL" id="AF175211">
    <property type="protein sequence ID" value="AAF00229.1"/>
    <property type="molecule type" value="Genomic_DNA"/>
</dbReference>
<dbReference type="EMBL" id="AF175212">
    <property type="protein sequence ID" value="AAF00230.1"/>
    <property type="molecule type" value="Genomic_DNA"/>
</dbReference>
<dbReference type="EMBL" id="AF175213">
    <property type="protein sequence ID" value="AAF00231.1"/>
    <property type="molecule type" value="Genomic_DNA"/>
</dbReference>
<dbReference type="EMBL" id="AF175214">
    <property type="protein sequence ID" value="AAF00232.1"/>
    <property type="molecule type" value="Genomic_DNA"/>
</dbReference>
<dbReference type="EMBL" id="AF175215">
    <property type="protein sequence ID" value="AAF00233.1"/>
    <property type="molecule type" value="Genomic_DNA"/>
</dbReference>
<dbReference type="EMBL" id="AF175216">
    <property type="protein sequence ID" value="AAF00234.1"/>
    <property type="molecule type" value="Genomic_DNA"/>
</dbReference>
<dbReference type="EMBL" id="AF175217">
    <property type="protein sequence ID" value="AAF00235.1"/>
    <property type="molecule type" value="Genomic_DNA"/>
</dbReference>
<dbReference type="EMBL" id="AF175218">
    <property type="protein sequence ID" value="AAF00236.1"/>
    <property type="molecule type" value="Genomic_DNA"/>
</dbReference>
<dbReference type="EMBL" id="AF175219">
    <property type="protein sequence ID" value="AAF00237.1"/>
    <property type="molecule type" value="Genomic_DNA"/>
</dbReference>
<dbReference type="EMBL" id="AF175220">
    <property type="protein sequence ID" value="AAF00238.1"/>
    <property type="molecule type" value="Genomic_DNA"/>
</dbReference>
<dbReference type="EMBL" id="AE014134">
    <property type="protein sequence ID" value="AAO41197.1"/>
    <property type="molecule type" value="Genomic_DNA"/>
</dbReference>
<dbReference type="EMBL" id="AE014134">
    <property type="protein sequence ID" value="AAO41199.1"/>
    <property type="molecule type" value="Genomic_DNA"/>
</dbReference>
<dbReference type="EMBL" id="AE014134">
    <property type="protein sequence ID" value="AAO41200.1"/>
    <property type="molecule type" value="Genomic_DNA"/>
</dbReference>
<dbReference type="EMBL" id="AE014134">
    <property type="protein sequence ID" value="AAO41201.1"/>
    <property type="molecule type" value="Genomic_DNA"/>
</dbReference>
<dbReference type="EMBL" id="AY060227">
    <property type="protein sequence ID" value="AAL25266.1"/>
    <property type="molecule type" value="mRNA"/>
</dbReference>
<dbReference type="EMBL" id="BT012435">
    <property type="protein sequence ID" value="AAS93706.1"/>
    <property type="molecule type" value="mRNA"/>
</dbReference>
<dbReference type="EMBL" id="M17845">
    <property type="protein sequence ID" value="AAA28363.1"/>
    <property type="molecule type" value="Genomic_DNA"/>
</dbReference>
<dbReference type="PIR" id="A93309">
    <property type="entry name" value="DEFFA"/>
</dbReference>
<dbReference type="RefSeq" id="NP_001027266.1">
    <property type="nucleotide sequence ID" value="NM_001032095.2"/>
</dbReference>
<dbReference type="RefSeq" id="NP_001027267.1">
    <property type="nucleotide sequence ID" value="NM_001032096.2"/>
</dbReference>
<dbReference type="RefSeq" id="NP_001027268.1">
    <property type="nucleotide sequence ID" value="NM_001032097.2"/>
</dbReference>
<dbReference type="RefSeq" id="NP_001027269.1">
    <property type="nucleotide sequence ID" value="NM_001032098.2"/>
</dbReference>
<dbReference type="RefSeq" id="NP_001027270.1">
    <property type="nucleotide sequence ID" value="NM_001032099.2"/>
</dbReference>
<dbReference type="PDB" id="1MG5">
    <property type="method" value="X-ray"/>
    <property type="resolution" value="1.63 A"/>
    <property type="chains" value="A/B=2-256"/>
</dbReference>
<dbReference type="PDBsum" id="1MG5"/>
<dbReference type="SMR" id="P00334"/>
<dbReference type="BioGRID" id="533474">
    <property type="interactions" value="62"/>
</dbReference>
<dbReference type="FunCoup" id="P00334">
    <property type="interactions" value="321"/>
</dbReference>
<dbReference type="IntAct" id="P00334">
    <property type="interactions" value="108"/>
</dbReference>
<dbReference type="STRING" id="7227.FBpp0100048"/>
<dbReference type="iPTMnet" id="P00334"/>
<dbReference type="PaxDb" id="7227-FBpp0100048"/>
<dbReference type="PeptideAtlas" id="P00334"/>
<dbReference type="DNASU" id="3771877"/>
<dbReference type="EnsemblMetazoa" id="FBtr0100589">
    <property type="protein sequence ID" value="FBpp0100045"/>
    <property type="gene ID" value="FBgn0000055"/>
</dbReference>
<dbReference type="EnsemblMetazoa" id="FBtr0100590">
    <property type="protein sequence ID" value="FBpp0100047"/>
    <property type="gene ID" value="FBgn0000055"/>
</dbReference>
<dbReference type="EnsemblMetazoa" id="FBtr0100591">
    <property type="protein sequence ID" value="FBpp0100048"/>
    <property type="gene ID" value="FBgn0000055"/>
</dbReference>
<dbReference type="EnsemblMetazoa" id="FBtr0100593">
    <property type="protein sequence ID" value="FBpp0100050"/>
    <property type="gene ID" value="FBgn0000055"/>
</dbReference>
<dbReference type="EnsemblMetazoa" id="FBtr0100594">
    <property type="protein sequence ID" value="FBpp0100051"/>
    <property type="gene ID" value="FBgn0000055"/>
</dbReference>
<dbReference type="GeneID" id="3771877"/>
<dbReference type="KEGG" id="dme:Dmel_CG3481"/>
<dbReference type="AGR" id="FB:FBgn0000055"/>
<dbReference type="CTD" id="3771877"/>
<dbReference type="FlyBase" id="FBgn0000055">
    <property type="gene designation" value="Adh"/>
</dbReference>
<dbReference type="VEuPathDB" id="VectorBase:FBgn0000055"/>
<dbReference type="eggNOG" id="KOG4169">
    <property type="taxonomic scope" value="Eukaryota"/>
</dbReference>
<dbReference type="GeneTree" id="ENSGT00940000154593"/>
<dbReference type="HOGENOM" id="CLU_010194_2_16_1"/>
<dbReference type="InParanoid" id="P00334"/>
<dbReference type="OrthoDB" id="417891at2759"/>
<dbReference type="PhylomeDB" id="P00334"/>
<dbReference type="SABIO-RK" id="P00334"/>
<dbReference type="SignaLink" id="P00334"/>
<dbReference type="BioGRID-ORCS" id="3771877">
    <property type="hits" value="0 hits in 1 CRISPR screen"/>
</dbReference>
<dbReference type="ChiTaRS" id="Adh">
    <property type="organism name" value="fly"/>
</dbReference>
<dbReference type="EvolutionaryTrace" id="P00334"/>
<dbReference type="GenomeRNAi" id="3771877"/>
<dbReference type="PRO" id="PR:P00334"/>
<dbReference type="Proteomes" id="UP000000803">
    <property type="component" value="Chromosome 2L"/>
</dbReference>
<dbReference type="Bgee" id="FBgn0000055">
    <property type="expression patterns" value="Expressed in fat body cell in open tracheal system trachea and 128 other cell types or tissues"/>
</dbReference>
<dbReference type="ExpressionAtlas" id="P00334">
    <property type="expression patterns" value="baseline and differential"/>
</dbReference>
<dbReference type="GO" id="GO:0005829">
    <property type="term" value="C:cytosol"/>
    <property type="evidence" value="ECO:0000314"/>
    <property type="project" value="FlyBase"/>
</dbReference>
<dbReference type="GO" id="GO:0004022">
    <property type="term" value="F:alcohol dehydrogenase (NAD+) activity"/>
    <property type="evidence" value="ECO:0000314"/>
    <property type="project" value="FlyBase"/>
</dbReference>
<dbReference type="GO" id="GO:0004029">
    <property type="term" value="F:aldehyde dehydrogenase (NAD+) activity"/>
    <property type="evidence" value="ECO:0000314"/>
    <property type="project" value="FlyBase"/>
</dbReference>
<dbReference type="GO" id="GO:0042803">
    <property type="term" value="F:protein homodimerization activity"/>
    <property type="evidence" value="ECO:0000353"/>
    <property type="project" value="FlyBase"/>
</dbReference>
<dbReference type="GO" id="GO:0006117">
    <property type="term" value="P:acetaldehyde metabolic process"/>
    <property type="evidence" value="ECO:0000315"/>
    <property type="project" value="FlyBase"/>
</dbReference>
<dbReference type="GO" id="GO:0019431">
    <property type="term" value="P:acetyl-CoA biosynthetic process from ethanol"/>
    <property type="evidence" value="ECO:0000314"/>
    <property type="project" value="FlyBase"/>
</dbReference>
<dbReference type="GO" id="GO:0046164">
    <property type="term" value="P:alcohol catabolic process"/>
    <property type="evidence" value="ECO:0000315"/>
    <property type="project" value="UniProtKB"/>
</dbReference>
<dbReference type="GO" id="GO:0006066">
    <property type="term" value="P:alcohol metabolic process"/>
    <property type="evidence" value="ECO:0000314"/>
    <property type="project" value="FlyBase"/>
</dbReference>
<dbReference type="GO" id="GO:0048149">
    <property type="term" value="P:behavioral response to ethanol"/>
    <property type="evidence" value="ECO:0000315"/>
    <property type="project" value="FlyBase"/>
</dbReference>
<dbReference type="GO" id="GO:0006067">
    <property type="term" value="P:ethanol metabolic process"/>
    <property type="evidence" value="ECO:0000315"/>
    <property type="project" value="FlyBase"/>
</dbReference>
<dbReference type="GO" id="GO:0006734">
    <property type="term" value="P:NADH metabolic process"/>
    <property type="evidence" value="ECO:0000314"/>
    <property type="project" value="FlyBase"/>
</dbReference>
<dbReference type="CDD" id="cd05323">
    <property type="entry name" value="ADH_SDR_c_like"/>
    <property type="match status" value="1"/>
</dbReference>
<dbReference type="FunFam" id="3.40.50.720:FF:000302">
    <property type="entry name" value="Alcohol dehydrogenase"/>
    <property type="match status" value="1"/>
</dbReference>
<dbReference type="Gene3D" id="3.40.50.720">
    <property type="entry name" value="NAD(P)-binding Rossmann-like Domain"/>
    <property type="match status" value="1"/>
</dbReference>
<dbReference type="InterPro" id="IPR002425">
    <property type="entry name" value="ADH_Drosophila-type"/>
</dbReference>
<dbReference type="InterPro" id="IPR036291">
    <property type="entry name" value="NAD(P)-bd_dom_sf"/>
</dbReference>
<dbReference type="InterPro" id="IPR020904">
    <property type="entry name" value="Sc_DH/Rdtase_CS"/>
</dbReference>
<dbReference type="InterPro" id="IPR002347">
    <property type="entry name" value="SDR_fam"/>
</dbReference>
<dbReference type="PANTHER" id="PTHR42901">
    <property type="entry name" value="ALCOHOL DEHYDROGENASE"/>
    <property type="match status" value="1"/>
</dbReference>
<dbReference type="PANTHER" id="PTHR42901:SF1">
    <property type="entry name" value="ALCOHOL DEHYDROGENASE"/>
    <property type="match status" value="1"/>
</dbReference>
<dbReference type="Pfam" id="PF00106">
    <property type="entry name" value="adh_short"/>
    <property type="match status" value="1"/>
</dbReference>
<dbReference type="PRINTS" id="PR01168">
    <property type="entry name" value="ALCDHDRGNASE"/>
</dbReference>
<dbReference type="PRINTS" id="PR01167">
    <property type="entry name" value="INSADHFAMILY"/>
</dbReference>
<dbReference type="PRINTS" id="PR00080">
    <property type="entry name" value="SDRFAMILY"/>
</dbReference>
<dbReference type="SUPFAM" id="SSF51735">
    <property type="entry name" value="NAD(P)-binding Rossmann-fold domains"/>
    <property type="match status" value="1"/>
</dbReference>
<dbReference type="PROSITE" id="PS00061">
    <property type="entry name" value="ADH_SHORT"/>
    <property type="match status" value="1"/>
</dbReference>
<keyword id="KW-0002">3D-structure</keyword>
<keyword id="KW-0007">Acetylation</keyword>
<keyword id="KW-0903">Direct protein sequencing</keyword>
<keyword id="KW-0520">NAD</keyword>
<keyword id="KW-0560">Oxidoreductase</keyword>
<keyword id="KW-1185">Reference proteome</keyword>
<feature type="initiator methionine" description="Removed" evidence="2 20">
    <location>
        <position position="1"/>
    </location>
</feature>
<feature type="chain" id="PRO_0000054474" description="Alcohol dehydrogenase">
    <location>
        <begin position="2"/>
        <end position="256"/>
    </location>
</feature>
<feature type="active site" description="Proton acceptor" evidence="5">
    <location>
        <position position="153"/>
    </location>
</feature>
<feature type="binding site" evidence="5">
    <location>
        <begin position="12"/>
        <end position="41"/>
    </location>
    <ligand>
        <name>NAD(+)</name>
        <dbReference type="ChEBI" id="CHEBI:57540"/>
    </ligand>
</feature>
<feature type="binding site" evidence="5">
    <location>
        <position position="65"/>
    </location>
    <ligand>
        <name>NAD(+)</name>
        <dbReference type="ChEBI" id="CHEBI:57540"/>
    </ligand>
</feature>
<feature type="binding site" evidence="5">
    <location>
        <position position="140"/>
    </location>
    <ligand>
        <name>substrate</name>
    </ligand>
</feature>
<feature type="binding site" evidence="5">
    <location>
        <position position="157"/>
    </location>
    <ligand>
        <name>NAD(+)</name>
        <dbReference type="ChEBI" id="CHEBI:57540"/>
    </ligand>
</feature>
<feature type="modified residue" description="N-acetylserine" evidence="20">
    <location>
        <position position="2"/>
    </location>
</feature>
<feature type="sequence variant" description="In allele Adh-UF.">
    <original>N</original>
    <variation>V</variation>
    <location>
        <position position="9"/>
    </location>
</feature>
<feature type="sequence variant" description="In allele Adh-UF.">
    <original>A</original>
    <variation>D</variation>
    <location>
        <position position="46"/>
    </location>
</feature>
<feature type="sequence variant" description="In strain: NC16.">
    <original>A</original>
    <variation>V</variation>
    <location>
        <position position="46"/>
    </location>
</feature>
<feature type="sequence variant" description="In allele Adh-F'.">
    <original>A</original>
    <variation>E</variation>
    <location>
        <position position="52"/>
    </location>
</feature>
<feature type="sequence variant" description="In strain: NC16.">
    <original>A</original>
    <variation>S</variation>
    <location>
        <position position="71"/>
    </location>
</feature>
<feature type="sequence variant" description="In allele Adh-F, allele Adh-F-CHD, allele Adh-71K, allele Adh-JA-F and in strain: Berkeley.">
    <original>K</original>
    <variation>T</variation>
    <location>
        <position position="193"/>
    </location>
</feature>
<feature type="sequence variant" description="In allele Adh-F-CHD and allele Adh-71K.">
    <original>P</original>
    <variation>S</variation>
    <location>
        <position position="215"/>
    </location>
</feature>
<feature type="mutagenesis site" description="31% decrease in activity." evidence="8">
    <original>G</original>
    <variation>A</variation>
    <location>
        <position position="15"/>
    </location>
</feature>
<feature type="mutagenesis site" description="In Adh-N11; loss of activity." evidence="8">
    <original>G</original>
    <variation>D</variation>
    <location>
        <position position="15"/>
    </location>
</feature>
<feature type="mutagenesis site" description="Complete loss of activity." evidence="8">
    <original>G</original>
    <variation>V</variation>
    <location>
        <position position="15"/>
    </location>
</feature>
<feature type="mutagenesis site" description="Complete loss of activity." evidence="21">
    <original>G</original>
    <variation>C</variation>
    <location>
        <position position="130"/>
    </location>
</feature>
<feature type="mutagenesis site" description="Complete loss of activity." evidence="21">
    <original>G</original>
    <variation>I</variation>
    <location>
        <position position="133"/>
    </location>
</feature>
<feature type="mutagenesis site" description="No decrease in activity." evidence="8">
    <original>C</original>
    <variation>A</variation>
    <location>
        <position position="136"/>
    </location>
</feature>
<feature type="mutagenesis site" description="Retains only 0.25% activity." evidence="4 21 22">
    <original>Y</original>
    <variation>C</variation>
    <location>
        <position position="153"/>
    </location>
</feature>
<feature type="mutagenesis site" description="Complete loss of activity." evidence="4 21 22">
    <original>Y</original>
    <variation>F</variation>
    <variation>H</variation>
    <variation>E</variation>
    <variation>Q</variation>
    <location>
        <position position="153"/>
    </location>
</feature>
<feature type="mutagenesis site" description="Complete loss of activity." evidence="21 22">
    <original>K</original>
    <variation>I</variation>
    <location>
        <position position="157"/>
    </location>
</feature>
<feature type="mutagenesis site" description="Retains only 2.2% activity." evidence="21 22">
    <original>K</original>
    <variation>R</variation>
    <location>
        <position position="157"/>
    </location>
</feature>
<feature type="mutagenesis site" description="Complete loss of activity." evidence="21">
    <original>G</original>
    <variation>L</variation>
    <location>
        <position position="184"/>
    </location>
</feature>
<feature type="mutagenesis site" description="No decrease in activity." evidence="8">
    <original>C</original>
    <variation>A</variation>
    <location>
        <position position="219"/>
    </location>
</feature>
<feature type="strand" evidence="26">
    <location>
        <begin position="9"/>
        <end position="13"/>
    </location>
</feature>
<feature type="turn" evidence="26">
    <location>
        <begin position="14"/>
        <end position="16"/>
    </location>
</feature>
<feature type="helix" evidence="26">
    <location>
        <begin position="18"/>
        <end position="27"/>
    </location>
</feature>
<feature type="strand" evidence="26">
    <location>
        <begin position="33"/>
        <end position="40"/>
    </location>
</feature>
<feature type="helix" evidence="26">
    <location>
        <begin position="44"/>
        <end position="53"/>
    </location>
</feature>
<feature type="strand" evidence="26">
    <location>
        <begin position="57"/>
        <end position="63"/>
    </location>
</feature>
<feature type="helix" evidence="26">
    <location>
        <begin position="70"/>
        <end position="84"/>
    </location>
</feature>
<feature type="strand" evidence="26">
    <location>
        <begin position="89"/>
        <end position="92"/>
    </location>
</feature>
<feature type="helix" evidence="26">
    <location>
        <begin position="102"/>
        <end position="109"/>
    </location>
</feature>
<feature type="helix" evidence="26">
    <location>
        <begin position="111"/>
        <end position="124"/>
    </location>
</feature>
<feature type="helix" evidence="26">
    <location>
        <begin position="126"/>
        <end position="128"/>
    </location>
</feature>
<feature type="strand" evidence="26">
    <location>
        <begin position="133"/>
        <end position="138"/>
    </location>
</feature>
<feature type="helix" evidence="26">
    <location>
        <begin position="141"/>
        <end position="143"/>
    </location>
</feature>
<feature type="helix" evidence="26">
    <location>
        <begin position="151"/>
        <end position="174"/>
    </location>
</feature>
<feature type="strand" evidence="26">
    <location>
        <begin position="175"/>
        <end position="183"/>
    </location>
</feature>
<feature type="strand" evidence="26">
    <location>
        <begin position="185"/>
        <end position="188"/>
    </location>
</feature>
<feature type="turn" evidence="26">
    <location>
        <begin position="189"/>
        <end position="192"/>
    </location>
</feature>
<feature type="helix" evidence="26">
    <location>
        <begin position="197"/>
        <end position="199"/>
    </location>
</feature>
<feature type="helix" evidence="26">
    <location>
        <begin position="204"/>
        <end position="209"/>
    </location>
</feature>
<feature type="helix" evidence="26">
    <location>
        <begin position="216"/>
        <end position="229"/>
    </location>
</feature>
<feature type="strand" evidence="26">
    <location>
        <begin position="235"/>
        <end position="239"/>
    </location>
</feature>
<feature type="strand" evidence="26">
    <location>
        <begin position="242"/>
        <end position="245"/>
    </location>
</feature>